<sequence>MSDPRKESLIVERFEMRASTEPKEGELELYSLFSIIFGFLGIMLKYKICLWVSAVCCVAYLSNLKSKDSSVRTILSPVSLSLMGLVMAYFGPNSNLFV</sequence>
<proteinExistence type="inferred from homology"/>
<evidence type="ECO:0000255" key="1"/>
<evidence type="ECO:0000305" key="2"/>
<accession>Q86H65</accession>
<accession>Q553E6</accession>
<dbReference type="EMBL" id="AAFI02000013">
    <property type="protein sequence ID" value="EAL69675.1"/>
    <property type="molecule type" value="Genomic_DNA"/>
</dbReference>
<dbReference type="RefSeq" id="XP_643471.1">
    <property type="nucleotide sequence ID" value="XM_638379.1"/>
</dbReference>
<dbReference type="SMR" id="Q86H65"/>
<dbReference type="FunCoup" id="Q86H65">
    <property type="interactions" value="22"/>
</dbReference>
<dbReference type="STRING" id="44689.Q86H65"/>
<dbReference type="PaxDb" id="44689-DDB0305010"/>
<dbReference type="EnsemblProtists" id="EAL69675">
    <property type="protein sequence ID" value="EAL69675"/>
    <property type="gene ID" value="DDB_G0275849"/>
</dbReference>
<dbReference type="GeneID" id="8620052"/>
<dbReference type="KEGG" id="ddi:DDB_G0275849"/>
<dbReference type="dictyBase" id="DDB_G0275849"/>
<dbReference type="VEuPathDB" id="AmoebaDB:DDB_G0275849"/>
<dbReference type="eggNOG" id="KOG3462">
    <property type="taxonomic scope" value="Eukaryota"/>
</dbReference>
<dbReference type="HOGENOM" id="CLU_128526_0_0_1"/>
<dbReference type="InParanoid" id="Q86H65"/>
<dbReference type="OMA" id="MFGLMMK"/>
<dbReference type="PhylomeDB" id="Q86H65"/>
<dbReference type="PRO" id="PR:Q86H65"/>
<dbReference type="Proteomes" id="UP000002195">
    <property type="component" value="Chromosome 2"/>
</dbReference>
<dbReference type="GO" id="GO:0005789">
    <property type="term" value="C:endoplasmic reticulum membrane"/>
    <property type="evidence" value="ECO:0000318"/>
    <property type="project" value="GO_Central"/>
</dbReference>
<dbReference type="GO" id="GO:0044183">
    <property type="term" value="F:protein folding chaperone"/>
    <property type="evidence" value="ECO:0000318"/>
    <property type="project" value="GO_Central"/>
</dbReference>
<dbReference type="GO" id="GO:0045048">
    <property type="term" value="P:protein insertion into ER membrane"/>
    <property type="evidence" value="ECO:0000318"/>
    <property type="project" value="GO_Central"/>
</dbReference>
<dbReference type="InterPro" id="IPR005351">
    <property type="entry name" value="ASTER"/>
</dbReference>
<dbReference type="PANTHER" id="PTHR13193">
    <property type="entry name" value="CGI-140"/>
    <property type="match status" value="1"/>
</dbReference>
<dbReference type="PANTHER" id="PTHR13193:SF0">
    <property type="entry name" value="PAT COMPLEX SUBUNIT ASTERIX"/>
    <property type="match status" value="1"/>
</dbReference>
<dbReference type="Pfam" id="PF03669">
    <property type="entry name" value="ASTER"/>
    <property type="match status" value="1"/>
</dbReference>
<gene>
    <name type="ORF">DDB_G0275849</name>
</gene>
<comment type="subcellular location">
    <subcellularLocation>
        <location evidence="2">Membrane</location>
        <topology evidence="2">Multi-pass membrane protein</topology>
    </subcellularLocation>
</comment>
<comment type="similarity">
    <text evidence="2">Belongs to the Asterix family.</text>
</comment>
<protein>
    <recommendedName>
        <fullName>Protein Asterix</fullName>
    </recommendedName>
</protein>
<name>ASTER_DICDI</name>
<organism>
    <name type="scientific">Dictyostelium discoideum</name>
    <name type="common">Social amoeba</name>
    <dbReference type="NCBI Taxonomy" id="44689"/>
    <lineage>
        <taxon>Eukaryota</taxon>
        <taxon>Amoebozoa</taxon>
        <taxon>Evosea</taxon>
        <taxon>Eumycetozoa</taxon>
        <taxon>Dictyostelia</taxon>
        <taxon>Dictyosteliales</taxon>
        <taxon>Dictyosteliaceae</taxon>
        <taxon>Dictyostelium</taxon>
    </lineage>
</organism>
<keyword id="KW-0472">Membrane</keyword>
<keyword id="KW-1185">Reference proteome</keyword>
<keyword id="KW-0812">Transmembrane</keyword>
<keyword id="KW-1133">Transmembrane helix</keyword>
<feature type="chain" id="PRO_0000328459" description="Protein Asterix">
    <location>
        <begin position="1"/>
        <end position="98"/>
    </location>
</feature>
<feature type="transmembrane region" description="Helical" evidence="1">
    <location>
        <begin position="32"/>
        <end position="52"/>
    </location>
</feature>
<feature type="transmembrane region" description="Helical" evidence="1">
    <location>
        <begin position="78"/>
        <end position="98"/>
    </location>
</feature>
<reference key="1">
    <citation type="journal article" date="2002" name="Nature">
        <title>Sequence and analysis of chromosome 2 of Dictyostelium discoideum.</title>
        <authorList>
            <person name="Gloeckner G."/>
            <person name="Eichinger L."/>
            <person name="Szafranski K."/>
            <person name="Pachebat J.A."/>
            <person name="Bankier A.T."/>
            <person name="Dear P.H."/>
            <person name="Lehmann R."/>
            <person name="Baumgart C."/>
            <person name="Parra G."/>
            <person name="Abril J.F."/>
            <person name="Guigo R."/>
            <person name="Kumpf K."/>
            <person name="Tunggal B."/>
            <person name="Cox E.C."/>
            <person name="Quail M.A."/>
            <person name="Platzer M."/>
            <person name="Rosenthal A."/>
            <person name="Noegel A.A."/>
        </authorList>
    </citation>
    <scope>NUCLEOTIDE SEQUENCE [LARGE SCALE GENOMIC DNA]</scope>
    <source>
        <strain>AX4</strain>
    </source>
</reference>
<reference key="2">
    <citation type="journal article" date="2005" name="Nature">
        <title>The genome of the social amoeba Dictyostelium discoideum.</title>
        <authorList>
            <person name="Eichinger L."/>
            <person name="Pachebat J.A."/>
            <person name="Gloeckner G."/>
            <person name="Rajandream M.A."/>
            <person name="Sucgang R."/>
            <person name="Berriman M."/>
            <person name="Song J."/>
            <person name="Olsen R."/>
            <person name="Szafranski K."/>
            <person name="Xu Q."/>
            <person name="Tunggal B."/>
            <person name="Kummerfeld S."/>
            <person name="Madera M."/>
            <person name="Konfortov B.A."/>
            <person name="Rivero F."/>
            <person name="Bankier A.T."/>
            <person name="Lehmann R."/>
            <person name="Hamlin N."/>
            <person name="Davies R."/>
            <person name="Gaudet P."/>
            <person name="Fey P."/>
            <person name="Pilcher K."/>
            <person name="Chen G."/>
            <person name="Saunders D."/>
            <person name="Sodergren E.J."/>
            <person name="Davis P."/>
            <person name="Kerhornou A."/>
            <person name="Nie X."/>
            <person name="Hall N."/>
            <person name="Anjard C."/>
            <person name="Hemphill L."/>
            <person name="Bason N."/>
            <person name="Farbrother P."/>
            <person name="Desany B."/>
            <person name="Just E."/>
            <person name="Morio T."/>
            <person name="Rost R."/>
            <person name="Churcher C.M."/>
            <person name="Cooper J."/>
            <person name="Haydock S."/>
            <person name="van Driessche N."/>
            <person name="Cronin A."/>
            <person name="Goodhead I."/>
            <person name="Muzny D.M."/>
            <person name="Mourier T."/>
            <person name="Pain A."/>
            <person name="Lu M."/>
            <person name="Harper D."/>
            <person name="Lindsay R."/>
            <person name="Hauser H."/>
            <person name="James K.D."/>
            <person name="Quiles M."/>
            <person name="Madan Babu M."/>
            <person name="Saito T."/>
            <person name="Buchrieser C."/>
            <person name="Wardroper A."/>
            <person name="Felder M."/>
            <person name="Thangavelu M."/>
            <person name="Johnson D."/>
            <person name="Knights A."/>
            <person name="Loulseged H."/>
            <person name="Mungall K.L."/>
            <person name="Oliver K."/>
            <person name="Price C."/>
            <person name="Quail M.A."/>
            <person name="Urushihara H."/>
            <person name="Hernandez J."/>
            <person name="Rabbinowitsch E."/>
            <person name="Steffen D."/>
            <person name="Sanders M."/>
            <person name="Ma J."/>
            <person name="Kohara Y."/>
            <person name="Sharp S."/>
            <person name="Simmonds M.N."/>
            <person name="Spiegler S."/>
            <person name="Tivey A."/>
            <person name="Sugano S."/>
            <person name="White B."/>
            <person name="Walker D."/>
            <person name="Woodward J.R."/>
            <person name="Winckler T."/>
            <person name="Tanaka Y."/>
            <person name="Shaulsky G."/>
            <person name="Schleicher M."/>
            <person name="Weinstock G.M."/>
            <person name="Rosenthal A."/>
            <person name="Cox E.C."/>
            <person name="Chisholm R.L."/>
            <person name="Gibbs R.A."/>
            <person name="Loomis W.F."/>
            <person name="Platzer M."/>
            <person name="Kay R.R."/>
            <person name="Williams J.G."/>
            <person name="Dear P.H."/>
            <person name="Noegel A.A."/>
            <person name="Barrell B.G."/>
            <person name="Kuspa A."/>
        </authorList>
    </citation>
    <scope>NUCLEOTIDE SEQUENCE [LARGE SCALE GENOMIC DNA]</scope>
    <source>
        <strain>AX4</strain>
    </source>
</reference>